<feature type="chain" id="PRO_0000246752" description="Protein Vpr">
    <location>
        <begin position="1"/>
        <end position="96"/>
    </location>
</feature>
<feature type="region of interest" description="Homooligomerization" evidence="1">
    <location>
        <begin position="1"/>
        <end position="42"/>
    </location>
</feature>
<feature type="modified residue" description="Phosphoserine; by host" evidence="1">
    <location>
        <position position="79"/>
    </location>
</feature>
<feature type="modified residue" description="Phosphoserine; by host" evidence="1">
    <location>
        <position position="94"/>
    </location>
</feature>
<feature type="modified residue" description="Phosphoserine; by host" evidence="1">
    <location>
        <position position="96"/>
    </location>
</feature>
<dbReference type="EMBL" id="U52953">
    <property type="protein sequence ID" value="AAB61128.1"/>
    <property type="molecule type" value="Genomic_DNA"/>
</dbReference>
<dbReference type="SMR" id="O12160"/>
<dbReference type="MINT" id="O12160"/>
<dbReference type="Proteomes" id="UP000007686">
    <property type="component" value="Segment"/>
</dbReference>
<dbReference type="GO" id="GO:0043657">
    <property type="term" value="C:host cell"/>
    <property type="evidence" value="ECO:0007669"/>
    <property type="project" value="GOC"/>
</dbReference>
<dbReference type="GO" id="GO:0042025">
    <property type="term" value="C:host cell nucleus"/>
    <property type="evidence" value="ECO:0007669"/>
    <property type="project" value="UniProtKB-SubCell"/>
</dbReference>
<dbReference type="GO" id="GO:0043655">
    <property type="term" value="C:host extracellular space"/>
    <property type="evidence" value="ECO:0007669"/>
    <property type="project" value="UniProtKB-SubCell"/>
</dbReference>
<dbReference type="GO" id="GO:0044423">
    <property type="term" value="C:virion component"/>
    <property type="evidence" value="ECO:0007669"/>
    <property type="project" value="UniProtKB-UniRule"/>
</dbReference>
<dbReference type="GO" id="GO:0006351">
    <property type="term" value="P:DNA-templated transcription"/>
    <property type="evidence" value="ECO:0007669"/>
    <property type="project" value="UniProtKB-UniRule"/>
</dbReference>
<dbReference type="GO" id="GO:0034220">
    <property type="term" value="P:monoatomic ion transmembrane transport"/>
    <property type="evidence" value="ECO:0007669"/>
    <property type="project" value="UniProtKB-KW"/>
</dbReference>
<dbReference type="GO" id="GO:0051260">
    <property type="term" value="P:protein homooligomerization"/>
    <property type="evidence" value="ECO:0007669"/>
    <property type="project" value="UniProtKB-UniRule"/>
</dbReference>
<dbReference type="GO" id="GO:0006355">
    <property type="term" value="P:regulation of DNA-templated transcription"/>
    <property type="evidence" value="ECO:0007669"/>
    <property type="project" value="UniProtKB-UniRule"/>
</dbReference>
<dbReference type="GO" id="GO:0046718">
    <property type="term" value="P:symbiont entry into host cell"/>
    <property type="evidence" value="ECO:0007669"/>
    <property type="project" value="UniProtKB-KW"/>
</dbReference>
<dbReference type="GO" id="GO:0052151">
    <property type="term" value="P:symbiont-mediated activation of host apoptosis"/>
    <property type="evidence" value="ECO:0007669"/>
    <property type="project" value="UniProtKB-UniRule"/>
</dbReference>
<dbReference type="GO" id="GO:0039592">
    <property type="term" value="P:symbiont-mediated arrest of host cell cycle during G2/M transition"/>
    <property type="evidence" value="ECO:0007669"/>
    <property type="project" value="UniProtKB-UniRule"/>
</dbReference>
<dbReference type="GO" id="GO:0075732">
    <property type="term" value="P:viral penetration into host nucleus"/>
    <property type="evidence" value="ECO:0007669"/>
    <property type="project" value="UniProtKB-UniRule"/>
</dbReference>
<dbReference type="FunFam" id="1.20.5.90:FF:000001">
    <property type="entry name" value="Protein Vpr"/>
    <property type="match status" value="1"/>
</dbReference>
<dbReference type="Gene3D" id="6.10.210.10">
    <property type="match status" value="1"/>
</dbReference>
<dbReference type="Gene3D" id="1.20.5.90">
    <property type="entry name" value="VpR/VpX protein, C-terminal domain"/>
    <property type="match status" value="1"/>
</dbReference>
<dbReference type="HAMAP" id="MF_04080">
    <property type="entry name" value="HIV_VPR"/>
    <property type="match status" value="1"/>
</dbReference>
<dbReference type="InterPro" id="IPR000012">
    <property type="entry name" value="RetroV_VpR/X"/>
</dbReference>
<dbReference type="Pfam" id="PF00522">
    <property type="entry name" value="VPR"/>
    <property type="match status" value="1"/>
</dbReference>
<dbReference type="PRINTS" id="PR00444">
    <property type="entry name" value="HIVVPRVPX"/>
</dbReference>
<protein>
    <recommendedName>
        <fullName evidence="1">Protein Vpr</fullName>
    </recommendedName>
    <alternativeName>
        <fullName evidence="1">R ORF protein</fullName>
    </alternativeName>
    <alternativeName>
        <fullName evidence="1">Viral protein R</fullName>
    </alternativeName>
</protein>
<evidence type="ECO:0000255" key="1">
    <source>
        <dbReference type="HAMAP-Rule" id="MF_04080"/>
    </source>
</evidence>
<organism>
    <name type="scientific">Human immunodeficiency virus type 1 group M subtype C (isolate 92BR025)</name>
    <name type="common">HIV-1</name>
    <dbReference type="NCBI Taxonomy" id="388812"/>
    <lineage>
        <taxon>Viruses</taxon>
        <taxon>Riboviria</taxon>
        <taxon>Pararnavirae</taxon>
        <taxon>Artverviricota</taxon>
        <taxon>Revtraviricetes</taxon>
        <taxon>Ortervirales</taxon>
        <taxon>Retroviridae</taxon>
        <taxon>Orthoretrovirinae</taxon>
        <taxon>Lentivirus</taxon>
        <taxon>Human immunodeficiency virus type 1</taxon>
    </lineage>
</organism>
<accession>O12160</accession>
<name>VPR_HV192</name>
<comment type="function">
    <text evidence="1">During virus replication, may deplete host UNG protein, and incude G2-M cell cycle arrest. Acts by targeting specific host proteins for degradation by the 26S proteasome, through association with the cellular CUL4A-DDB1 E3 ligase complex by direct interaction with host VPRPB/DCAF-1. Cell cycle arrest reportedly occurs within hours of infection and is not blocked by antiviral agents, suggesting that it is initiated by the VPR carried into the virion. Additionally, VPR induces apoptosis in a cell cycle dependent manner suggesting that these two effects are mechanistically linked. Detected in the serum and cerebrospinal fluid of AIDS patient, VPR may also induce cell death to bystander cells.</text>
</comment>
<comment type="function">
    <text evidence="1">During virus entry, plays a role in the transport of the viral pre-integration (PIC) complex to the host nucleus. This function is crucial for viral infection of non-dividing macrophages. May act directly at the nuclear pore complex, by binding nucleoporins phenylalanine-glycine (FG)-repeat regions.</text>
</comment>
<comment type="subunit">
    <text evidence="1">Homooligomer, may form homodimer. Interacts with p6-gag region of the Pr55 Gag precursor protein through a (Leu-X-X)4 motif near the C-terminus of the P6gag protein. Interacts with host UNG. May interact with host RAD23A/HHR23A. Interacts with host VPRBP/DCAF1, leading to hijack the CUL4A-RBX1-DDB1-DCAF1/VPRBP complex, mediating ubiquitination of host proteins such as TERT and ZGPAT and arrest of the cell cycle in G2 phase.</text>
</comment>
<comment type="subcellular location">
    <subcellularLocation>
        <location evidence="1">Virion</location>
    </subcellularLocation>
    <subcellularLocation>
        <location evidence="1">Host nucleus</location>
    </subcellularLocation>
    <subcellularLocation>
        <location evidence="1">Host extracellular space</location>
    </subcellularLocation>
    <text evidence="1">Incorporation into virion is dependent on p6 GAG sequences. Lacks a canonical nuclear localization signal, thus import into nucleus may function independently of the human importin pathway. Detected in high quantity in the serum and cerebrospinal fluid of AIDS patient.</text>
</comment>
<comment type="PTM">
    <text evidence="1">Phosphorylated on several residues by host. These phosphorylations regulate VPR activity for the nuclear import of the HIV-1 pre-integration complex.</text>
</comment>
<comment type="miscellaneous">
    <text evidence="1">HIV-1 lineages are divided in three main groups, M (for Major), O (for Outlier), and N (for New, or Non-M, Non-O). The vast majority of strains found worldwide belong to the group M. Group O seems to be endemic to and largely confined to Cameroon and neighboring countries in West Central Africa, where these viruses represent a small minority of HIV-1 strains. The group N is represented by a limited number of isolates from Cameroonian persons. The group M is further subdivided in 9 clades or subtypes (A to D, F to H, J and K).</text>
</comment>
<comment type="similarity">
    <text evidence="1">Belongs to the HIV-1 VPR protein family.</text>
</comment>
<sequence>MEQAPEDQGPQREPYNEWTLELLEELKREAVRHFPRPWLHGLGQHIYETYGDTWTGVEAIIRILQRLLFVHFRIGCQHSRIGILRQRRARNGASRS</sequence>
<reference key="1">
    <citation type="journal article" date="1996" name="J. Virol.">
        <title>Molecular cloning and analysis of functional envelope genes from human immunodeficiency virus type 1 sequence subtypes A through G. The WHO and NIAID Networks for HIV Isolation and Characterization.</title>
        <authorList>
            <person name="Gao F."/>
            <person name="Morrison S.G."/>
            <person name="Robertson D.L."/>
            <person name="Thornton C.L."/>
            <person name="Craig S."/>
            <person name="Karlsson G."/>
            <person name="Sodroski J."/>
            <person name="Morgado M."/>
            <person name="Galvao-Castro B."/>
            <person name="von Briesen H."/>
            <person name="Beddows S."/>
            <person name="Weber J."/>
            <person name="Sharp P.M."/>
            <person name="Shaw G.M."/>
            <person name="Hahn B.H."/>
        </authorList>
    </citation>
    <scope>NUCLEOTIDE SEQUENCE [GENOMIC DNA]</scope>
</reference>
<organismHost>
    <name type="scientific">Homo sapiens</name>
    <name type="common">Human</name>
    <dbReference type="NCBI Taxonomy" id="9606"/>
</organismHost>
<gene>
    <name evidence="1" type="primary">vpr</name>
</gene>
<keyword id="KW-0010">Activator</keyword>
<keyword id="KW-0014">AIDS</keyword>
<keyword id="KW-0053">Apoptosis</keyword>
<keyword id="KW-0131">Cell cycle</keyword>
<keyword id="KW-1079">Host G2/M cell cycle arrest by virus</keyword>
<keyword id="KW-1048">Host nucleus</keyword>
<keyword id="KW-0945">Host-virus interaction</keyword>
<keyword id="KW-0407">Ion channel</keyword>
<keyword id="KW-0406">Ion transport</keyword>
<keyword id="KW-1121">Modulation of host cell cycle by virus</keyword>
<keyword id="KW-0597">Phosphoprotein</keyword>
<keyword id="KW-1185">Reference proteome</keyword>
<keyword id="KW-0804">Transcription</keyword>
<keyword id="KW-0805">Transcription regulation</keyword>
<keyword id="KW-0813">Transport</keyword>
<keyword id="KW-1163">Viral penetration into host nucleus</keyword>
<keyword id="KW-0946">Virion</keyword>
<keyword id="KW-1160">Virus entry into host cell</keyword>
<proteinExistence type="inferred from homology"/>